<protein>
    <recommendedName>
        <fullName>Protein MEMO1</fullName>
    </recommendedName>
    <alternativeName>
        <fullName>Mediator of ErbB2-driven cell motility 1</fullName>
        <shortName>Memo-1</shortName>
    </alternativeName>
</protein>
<keyword id="KW-0597">Phosphoprotein</keyword>
<keyword id="KW-1185">Reference proteome</keyword>
<sequence>MSNRVVCREASHAGSWYTASGPQLNAQLEGWLSQVQSTKRPARAIIAPHAGYTYCGSCAAHAYKQVDPSITRRIFILGPSHHVPLSRCALSSVDIYRTPLYDLRIDQKIYGELWKTGMFERMSLQTDEDEHSIEMHLPYTAKAMESHKDEFTIIPVLVGALSESKEQEFGKLFSKYLADPSNLFVVSSDFCHWGQRFRYSYYDESQGEIYRSIEHLDKMGMSIIEQLDPVSFSNYLKKYHNTICGRHPIGVLLNAITELQKSGMNMSFSFLNYAQSSQCRSWQDSSVSYAAGALTVH</sequence>
<reference key="1">
    <citation type="journal article" date="2004" name="Genome Res.">
        <title>The status, quality, and expansion of the NIH full-length cDNA project: the Mammalian Gene Collection (MGC).</title>
        <authorList>
            <consortium name="The MGC Project Team"/>
        </authorList>
    </citation>
    <scope>NUCLEOTIDE SEQUENCE [LARGE SCALE MRNA]</scope>
    <source>
        <tissue>Placenta</tissue>
    </source>
</reference>
<reference key="2">
    <citation type="journal article" date="2012" name="Nat. Commun.">
        <title>Quantitative maps of protein phosphorylation sites across 14 different rat organs and tissues.</title>
        <authorList>
            <person name="Lundby A."/>
            <person name="Secher A."/>
            <person name="Lage K."/>
            <person name="Nordsborg N.B."/>
            <person name="Dmytriyev A."/>
            <person name="Lundby C."/>
            <person name="Olsen J.V."/>
        </authorList>
    </citation>
    <scope>IDENTIFICATION BY MASS SPECTROMETRY [LARGE SCALE ANALYSIS]</scope>
</reference>
<accession>Q4QQR9</accession>
<comment type="function">
    <text evidence="1">May control cell migration by relaying extracellular chemotactic signals to the microtubule cytoskeleton. Mediator of ERBB2 signaling. The MEMO1-RHOA-DIAPH1 signaling pathway plays an important role in ERBB2-dependent stabilization of microtubules at the cell cortex. It controls the localization of APC and CLASP2 to the cell membrane, via the regulation of GSK3B activity. In turn, membrane-bound APC allows the localization of the MACF1 to the cell membrane, which is required for microtubule capture and stabilization (By similarity).</text>
</comment>
<comment type="subunit">
    <text evidence="1">Interacts with ERBB2 phosphorylated on 'Tyr-1250'.</text>
</comment>
<comment type="similarity">
    <text evidence="3">Belongs to the MEMO1 family.</text>
</comment>
<name>MEMO1_RAT</name>
<dbReference type="EMBL" id="BC098061">
    <property type="protein sequence ID" value="AAH98061.1"/>
    <property type="molecule type" value="mRNA"/>
</dbReference>
<dbReference type="RefSeq" id="NP_001025088.1">
    <property type="nucleotide sequence ID" value="NM_001029917.1"/>
</dbReference>
<dbReference type="RefSeq" id="XP_038967828.1">
    <property type="nucleotide sequence ID" value="XM_039111900.1"/>
</dbReference>
<dbReference type="SMR" id="Q4QQR9"/>
<dbReference type="FunCoup" id="Q4QQR9">
    <property type="interactions" value="1954"/>
</dbReference>
<dbReference type="IntAct" id="Q4QQR9">
    <property type="interactions" value="9"/>
</dbReference>
<dbReference type="STRING" id="10116.ENSRNOP00000008687"/>
<dbReference type="PhosphoSitePlus" id="Q4QQR9"/>
<dbReference type="jPOST" id="Q4QQR9"/>
<dbReference type="PaxDb" id="10116-ENSRNOP00000008687"/>
<dbReference type="Ensembl" id="ENSRNOT00000008687.6">
    <property type="protein sequence ID" value="ENSRNOP00000008687.4"/>
    <property type="gene ID" value="ENSRNOG00000006340.7"/>
</dbReference>
<dbReference type="GeneID" id="298787"/>
<dbReference type="KEGG" id="rno:298787"/>
<dbReference type="UCSC" id="RGD:1309929">
    <property type="organism name" value="rat"/>
</dbReference>
<dbReference type="AGR" id="RGD:1309929"/>
<dbReference type="CTD" id="51072"/>
<dbReference type="RGD" id="1309929">
    <property type="gene designation" value="Memo1"/>
</dbReference>
<dbReference type="eggNOG" id="KOG3086">
    <property type="taxonomic scope" value="Eukaryota"/>
</dbReference>
<dbReference type="GeneTree" id="ENSGT00390000006408"/>
<dbReference type="InParanoid" id="Q4QQR9"/>
<dbReference type="PhylomeDB" id="Q4QQR9"/>
<dbReference type="Reactome" id="R-RNO-6785631">
    <property type="pathway name" value="ERBB2 Regulates Cell Motility"/>
</dbReference>
<dbReference type="PRO" id="PR:Q4QQR9"/>
<dbReference type="Proteomes" id="UP000002494">
    <property type="component" value="Chromosome 6"/>
</dbReference>
<dbReference type="GO" id="GO:0032886">
    <property type="term" value="P:regulation of microtubule-based process"/>
    <property type="evidence" value="ECO:0000250"/>
    <property type="project" value="UniProtKB"/>
</dbReference>
<dbReference type="CDD" id="cd07361">
    <property type="entry name" value="MEMO_like"/>
    <property type="match status" value="1"/>
</dbReference>
<dbReference type="FunFam" id="3.40.830.10:FF:000002">
    <property type="entry name" value="MEMO1 isoform 1"/>
    <property type="match status" value="1"/>
</dbReference>
<dbReference type="Gene3D" id="3.40.830.10">
    <property type="entry name" value="LigB-like"/>
    <property type="match status" value="1"/>
</dbReference>
<dbReference type="HAMAP" id="MF_00055">
    <property type="entry name" value="MEMO1"/>
    <property type="match status" value="1"/>
</dbReference>
<dbReference type="InterPro" id="IPR002737">
    <property type="entry name" value="MEMO1_fam"/>
</dbReference>
<dbReference type="NCBIfam" id="TIGR04336">
    <property type="entry name" value="AmmeMemoSam_B"/>
    <property type="match status" value="1"/>
</dbReference>
<dbReference type="PANTHER" id="PTHR11060">
    <property type="entry name" value="PROTEIN MEMO1"/>
    <property type="match status" value="1"/>
</dbReference>
<dbReference type="PANTHER" id="PTHR11060:SF0">
    <property type="entry name" value="PROTEIN MEMO1"/>
    <property type="match status" value="1"/>
</dbReference>
<dbReference type="Pfam" id="PF01875">
    <property type="entry name" value="Memo"/>
    <property type="match status" value="1"/>
</dbReference>
<proteinExistence type="evidence at protein level"/>
<gene>
    <name type="primary">Memo1</name>
</gene>
<evidence type="ECO:0000250" key="1"/>
<evidence type="ECO:0000250" key="2">
    <source>
        <dbReference type="UniProtKB" id="Q91VH6"/>
    </source>
</evidence>
<evidence type="ECO:0000305" key="3"/>
<organism>
    <name type="scientific">Rattus norvegicus</name>
    <name type="common">Rat</name>
    <dbReference type="NCBI Taxonomy" id="10116"/>
    <lineage>
        <taxon>Eukaryota</taxon>
        <taxon>Metazoa</taxon>
        <taxon>Chordata</taxon>
        <taxon>Craniata</taxon>
        <taxon>Vertebrata</taxon>
        <taxon>Euteleostomi</taxon>
        <taxon>Mammalia</taxon>
        <taxon>Eutheria</taxon>
        <taxon>Euarchontoglires</taxon>
        <taxon>Glires</taxon>
        <taxon>Rodentia</taxon>
        <taxon>Myomorpha</taxon>
        <taxon>Muroidea</taxon>
        <taxon>Muridae</taxon>
        <taxon>Murinae</taxon>
        <taxon>Rattus</taxon>
    </lineage>
</organism>
<feature type="chain" id="PRO_0000260510" description="Protein MEMO1">
    <location>
        <begin position="1"/>
        <end position="297"/>
    </location>
</feature>
<feature type="modified residue" description="Phosphotyrosine" evidence="2">
    <location>
        <position position="210"/>
    </location>
</feature>